<comment type="similarity">
    <text evidence="2">Belongs to the HupG/HyaE family.</text>
</comment>
<proteinExistence type="inferred from homology"/>
<protein>
    <recommendedName>
        <fullName>Hydrogenase expression/formation protein HoxO</fullName>
    </recommendedName>
</protein>
<accession>P40593</accession>
<gene>
    <name type="primary">hoxO</name>
</gene>
<feature type="chain" id="PRO_0000201410" description="Hydrogenase expression/formation protein HoxO">
    <location>
        <begin position="1"/>
        <end position="148"/>
    </location>
</feature>
<feature type="region of interest" description="Disordered" evidence="1">
    <location>
        <begin position="128"/>
        <end position="148"/>
    </location>
</feature>
<feature type="compositionally biased region" description="Polar residues" evidence="1">
    <location>
        <begin position="134"/>
        <end position="148"/>
    </location>
</feature>
<dbReference type="EMBL" id="M80522">
    <property type="protein sequence ID" value="AAA22128.1"/>
    <property type="molecule type" value="Genomic_DNA"/>
</dbReference>
<dbReference type="EMBL" id="L23970">
    <property type="protein sequence ID" value="AAA19503.1"/>
    <property type="molecule type" value="Unassigned_DNA"/>
</dbReference>
<dbReference type="PIR" id="C44915">
    <property type="entry name" value="C44915"/>
</dbReference>
<dbReference type="RefSeq" id="WP_012703495.1">
    <property type="nucleotide sequence ID" value="NZ_FPKM01000029.1"/>
</dbReference>
<dbReference type="SMR" id="P40593"/>
<dbReference type="OMA" id="HCLFIPG"/>
<dbReference type="CDD" id="cd02965">
    <property type="entry name" value="HyaE"/>
    <property type="match status" value="1"/>
</dbReference>
<dbReference type="Gene3D" id="3.40.30.10">
    <property type="entry name" value="Glutaredoxin"/>
    <property type="match status" value="1"/>
</dbReference>
<dbReference type="InterPro" id="IPR010893">
    <property type="entry name" value="NiFe-hyd_mat_HyaE"/>
</dbReference>
<dbReference type="InterPro" id="IPR036249">
    <property type="entry name" value="Thioredoxin-like_sf"/>
</dbReference>
<dbReference type="Pfam" id="PF07449">
    <property type="entry name" value="HyaE"/>
    <property type="match status" value="1"/>
</dbReference>
<dbReference type="PIRSF" id="PIRSF038934">
    <property type="entry name" value="HyaE_HupG"/>
    <property type="match status" value="1"/>
</dbReference>
<dbReference type="SUPFAM" id="SSF52833">
    <property type="entry name" value="Thioredoxin-like"/>
    <property type="match status" value="1"/>
</dbReference>
<evidence type="ECO:0000256" key="1">
    <source>
        <dbReference type="SAM" id="MobiDB-lite"/>
    </source>
</evidence>
<evidence type="ECO:0000305" key="2"/>
<organism>
    <name type="scientific">Azotobacter vinelandii</name>
    <dbReference type="NCBI Taxonomy" id="354"/>
    <lineage>
        <taxon>Bacteria</taxon>
        <taxon>Pseudomonadati</taxon>
        <taxon>Pseudomonadota</taxon>
        <taxon>Gammaproteobacteria</taxon>
        <taxon>Pseudomonadales</taxon>
        <taxon>Pseudomonadaceae</taxon>
        <taxon>Azotobacter</taxon>
    </lineage>
</organism>
<name>HOXO_AZOVI</name>
<reference key="1">
    <citation type="journal article" date="1992" name="J. Bacteriol.">
        <title>Nucleotide sequences and genetic analysis of hydrogen oxidation (hox) genes in Azotobacter vinelandii.</title>
        <authorList>
            <person name="Menon A."/>
            <person name="Mortenson L.E."/>
            <person name="Robson R.L."/>
        </authorList>
    </citation>
    <scope>NUCLEOTIDE SEQUENCE [GENOMIC DNA]</scope>
    <source>
        <strain>ATCC 13705 / OP1 / DSM 366 / NCIMB 11614 / LMG 3878 / UW</strain>
    </source>
</reference>
<sequence length="148" mass="16253">MIHPLIQRLTTTLGYPLLDADGLDRQVRTQPFSVLFFAGDPQRFPEALDVAVILPELVKAFPQLAPALIAGADEARLQGRYGFSVWPSLVFLAGERYLGCLSRVLDWGEYLERIPAILAGENEDLPRIPVLSPESGTPSCSPMETSES</sequence>